<evidence type="ECO:0000255" key="1">
    <source>
        <dbReference type="HAMAP-Rule" id="MF_04072"/>
    </source>
</evidence>
<evidence type="ECO:0000305" key="2"/>
<dbReference type="EMBL" id="CY008676">
    <property type="protein sequence ID" value="ABD17323.1"/>
    <property type="molecule type" value="Genomic_RNA"/>
</dbReference>
<dbReference type="SMR" id="Q2ICR0"/>
<dbReference type="GlyCosmos" id="Q2ICR0">
    <property type="glycosylation" value="7 sites, No reported glycans"/>
</dbReference>
<dbReference type="Proteomes" id="UP000009189">
    <property type="component" value="Genome"/>
</dbReference>
<dbReference type="GO" id="GO:0020002">
    <property type="term" value="C:host cell plasma membrane"/>
    <property type="evidence" value="ECO:0007669"/>
    <property type="project" value="UniProtKB-SubCell"/>
</dbReference>
<dbReference type="GO" id="GO:0016020">
    <property type="term" value="C:membrane"/>
    <property type="evidence" value="ECO:0007669"/>
    <property type="project" value="UniProtKB-UniRule"/>
</dbReference>
<dbReference type="GO" id="GO:0019031">
    <property type="term" value="C:viral envelope"/>
    <property type="evidence" value="ECO:0007669"/>
    <property type="project" value="UniProtKB-UniRule"/>
</dbReference>
<dbReference type="GO" id="GO:0055036">
    <property type="term" value="C:virion membrane"/>
    <property type="evidence" value="ECO:0007669"/>
    <property type="project" value="UniProtKB-SubCell"/>
</dbReference>
<dbReference type="GO" id="GO:0046789">
    <property type="term" value="F:host cell surface receptor binding"/>
    <property type="evidence" value="ECO:0007669"/>
    <property type="project" value="UniProtKB-UniRule"/>
</dbReference>
<dbReference type="GO" id="GO:0075512">
    <property type="term" value="P:clathrin-dependent endocytosis of virus by host cell"/>
    <property type="evidence" value="ECO:0007669"/>
    <property type="project" value="UniProtKB-UniRule"/>
</dbReference>
<dbReference type="GO" id="GO:0039654">
    <property type="term" value="P:fusion of virus membrane with host endosome membrane"/>
    <property type="evidence" value="ECO:0007669"/>
    <property type="project" value="UniProtKB-UniRule"/>
</dbReference>
<dbReference type="GO" id="GO:0019064">
    <property type="term" value="P:fusion of virus membrane with host plasma membrane"/>
    <property type="evidence" value="ECO:0007669"/>
    <property type="project" value="InterPro"/>
</dbReference>
<dbReference type="GO" id="GO:0046761">
    <property type="term" value="P:viral budding from plasma membrane"/>
    <property type="evidence" value="ECO:0007669"/>
    <property type="project" value="UniProtKB-UniRule"/>
</dbReference>
<dbReference type="GO" id="GO:0019062">
    <property type="term" value="P:virion attachment to host cell"/>
    <property type="evidence" value="ECO:0007669"/>
    <property type="project" value="UniProtKB-KW"/>
</dbReference>
<dbReference type="FunFam" id="3.90.20.10:FF:000001">
    <property type="entry name" value="Hemagglutinin"/>
    <property type="match status" value="1"/>
</dbReference>
<dbReference type="FunFam" id="3.90.209.20:FF:000001">
    <property type="entry name" value="Hemagglutinin"/>
    <property type="match status" value="1"/>
</dbReference>
<dbReference type="Gene3D" id="3.90.20.10">
    <property type="match status" value="1"/>
</dbReference>
<dbReference type="Gene3D" id="3.90.209.20">
    <property type="match status" value="1"/>
</dbReference>
<dbReference type="HAMAP" id="MF_04072">
    <property type="entry name" value="INFV_HEMA"/>
    <property type="match status" value="1"/>
</dbReference>
<dbReference type="InterPro" id="IPR008980">
    <property type="entry name" value="Capsid_hemagglutn"/>
</dbReference>
<dbReference type="InterPro" id="IPR013828">
    <property type="entry name" value="Hemagglutn_HA1_a/b_dom_sf"/>
</dbReference>
<dbReference type="InterPro" id="IPR000149">
    <property type="entry name" value="Hemagglutn_influenz_A"/>
</dbReference>
<dbReference type="InterPro" id="IPR001364">
    <property type="entry name" value="Hemagglutn_influenz_A/B"/>
</dbReference>
<dbReference type="Pfam" id="PF00509">
    <property type="entry name" value="Hemagglutinin"/>
    <property type="match status" value="1"/>
</dbReference>
<dbReference type="PRINTS" id="PR00330">
    <property type="entry name" value="HEMAGGLUTN1"/>
</dbReference>
<dbReference type="PRINTS" id="PR00329">
    <property type="entry name" value="HEMAGGLUTN12"/>
</dbReference>
<dbReference type="SUPFAM" id="SSF58064">
    <property type="entry name" value="Influenza hemagglutinin (stalk)"/>
    <property type="match status" value="1"/>
</dbReference>
<dbReference type="SUPFAM" id="SSF49818">
    <property type="entry name" value="Viral protein domain"/>
    <property type="match status" value="1"/>
</dbReference>
<accession>Q2ICR0</accession>
<feature type="signal peptide" evidence="1">
    <location>
        <begin position="1"/>
        <end position="16"/>
    </location>
</feature>
<feature type="chain" id="PRO_0000440430" description="Hemagglutinin" evidence="1">
    <location>
        <begin position="17"/>
        <end position="566"/>
    </location>
</feature>
<feature type="chain" id="PRO_5000136641" description="Hemagglutinin HA1 chain">
    <location>
        <begin position="17"/>
        <end position="344"/>
    </location>
</feature>
<feature type="chain" id="PRO_5000136642" description="Hemagglutinin HA2 chain" evidence="1">
    <location>
        <begin position="346"/>
        <end position="566"/>
    </location>
</feature>
<feature type="topological domain" description="Extracellular" evidence="1">
    <location>
        <begin position="17"/>
        <end position="530"/>
    </location>
</feature>
<feature type="transmembrane region" description="Helical" evidence="1">
    <location>
        <begin position="531"/>
        <end position="551"/>
    </location>
</feature>
<feature type="topological domain" description="Cytoplasmic" evidence="1">
    <location>
        <begin position="552"/>
        <end position="566"/>
    </location>
</feature>
<feature type="site" description="Cleavage; by host" evidence="1">
    <location>
        <begin position="345"/>
        <end position="346"/>
    </location>
</feature>
<feature type="lipid moiety-binding region" description="S-palmitoyl cysteine; by host" evidence="1">
    <location>
        <position position="555"/>
    </location>
</feature>
<feature type="lipid moiety-binding region" description="S-palmitoyl cysteine; by host" evidence="1">
    <location>
        <position position="562"/>
    </location>
</feature>
<feature type="lipid moiety-binding region" description="S-palmitoyl cysteine; by host" evidence="1">
    <location>
        <position position="565"/>
    </location>
</feature>
<feature type="glycosylation site" description="N-linked (GlcNAc...) asparagine; by host" evidence="1">
    <location>
        <position position="24"/>
    </location>
</feature>
<feature type="glycosylation site" description="N-linked (GlcNAc...) asparagine; by host" evidence="1">
    <location>
        <position position="38"/>
    </location>
</feature>
<feature type="glycosylation site" description="N-linked (GlcNAc...) asparagine; by host" evidence="1">
    <location>
        <position position="54"/>
    </location>
</feature>
<feature type="glycosylation site" description="N-linked (GlcNAc...) asparagine; by host" evidence="1">
    <location>
        <position position="97"/>
    </location>
</feature>
<feature type="glycosylation site" description="N-linked (GlcNAc...) asparagine; by host" evidence="1">
    <location>
        <position position="181"/>
    </location>
</feature>
<feature type="glycosylation site" description="N-linked (GlcNAc...) asparagine; by host" evidence="1">
    <location>
        <position position="301"/>
    </location>
</feature>
<feature type="glycosylation site" description="N-linked (GlcNAc...) asparagine; by host" evidence="1">
    <location>
        <position position="499"/>
    </location>
</feature>
<feature type="disulfide bond" description="Interchain (between HA1 and HA2 chains)" evidence="1">
    <location>
        <begin position="30"/>
        <end position="482"/>
    </location>
</feature>
<feature type="disulfide bond" evidence="1">
    <location>
        <begin position="68"/>
        <end position="293"/>
    </location>
</feature>
<feature type="disulfide bond" evidence="1">
    <location>
        <begin position="80"/>
        <end position="92"/>
    </location>
</feature>
<feature type="disulfide bond" evidence="1">
    <location>
        <begin position="113"/>
        <end position="155"/>
    </location>
</feature>
<feature type="disulfide bond" evidence="1">
    <location>
        <begin position="297"/>
        <end position="321"/>
    </location>
</feature>
<feature type="disulfide bond" evidence="1">
    <location>
        <begin position="489"/>
        <end position="493"/>
    </location>
</feature>
<organism>
    <name type="scientific">Influenza A virus (strain A/Memphis/101/1972 H3N2)</name>
    <dbReference type="NCBI Taxonomy" id="383583"/>
    <lineage>
        <taxon>Viruses</taxon>
        <taxon>Riboviria</taxon>
        <taxon>Orthornavirae</taxon>
        <taxon>Negarnaviricota</taxon>
        <taxon>Polyploviricotina</taxon>
        <taxon>Insthoviricetes</taxon>
        <taxon>Articulavirales</taxon>
        <taxon>Orthomyxoviridae</taxon>
        <taxon>Alphainfluenzavirus</taxon>
        <taxon>Alphainfluenzavirus influenzae</taxon>
        <taxon>Influenza A virus</taxon>
    </lineage>
</organism>
<protein>
    <recommendedName>
        <fullName evidence="1">Hemagglutinin</fullName>
    </recommendedName>
    <component>
        <recommendedName>
            <fullName evidence="1">Hemagglutinin HA1 chain</fullName>
        </recommendedName>
    </component>
    <component>
        <recommendedName>
            <fullName evidence="1">Hemagglutinin HA2 chain</fullName>
        </recommendedName>
    </component>
</protein>
<reference key="1">
    <citation type="submission" date="2006-02" db="EMBL/GenBank/DDBJ databases">
        <title>The NIAID influenza genome sequencing project.</title>
        <authorList>
            <person name="Ghedin E."/>
            <person name="Spiro D."/>
            <person name="Miller N."/>
            <person name="Zaborsky J."/>
            <person name="Feldblyum T."/>
            <person name="Subbu V."/>
            <person name="Shumway M."/>
            <person name="Sparenborg J."/>
            <person name="Groveman L."/>
            <person name="Halpin R."/>
            <person name="Sitz J."/>
            <person name="Koo H."/>
            <person name="Salzberg S.L."/>
            <person name="Webster R.G."/>
            <person name="Hoffmann E."/>
            <person name="Krauss S."/>
            <person name="Naeve C."/>
            <person name="Bao Y."/>
            <person name="Bolotov P."/>
            <person name="Dernovoy D."/>
            <person name="Kiryutin B."/>
            <person name="Lipman D.J."/>
            <person name="Tatusova T."/>
        </authorList>
    </citation>
    <scope>NUCLEOTIDE SEQUENCE [GENOMIC RNA]</scope>
</reference>
<organismHost>
    <name type="scientific">Aves</name>
    <dbReference type="NCBI Taxonomy" id="8782"/>
</organismHost>
<organismHost>
    <name type="scientific">Cetacea</name>
    <name type="common">whales</name>
    <dbReference type="NCBI Taxonomy" id="9721"/>
</organismHost>
<organismHost>
    <name type="scientific">Homo sapiens</name>
    <name type="common">Human</name>
    <dbReference type="NCBI Taxonomy" id="9606"/>
</organismHost>
<organismHost>
    <name type="scientific">Phocidae</name>
    <name type="common">true seals</name>
    <dbReference type="NCBI Taxonomy" id="9709"/>
</organismHost>
<organismHost>
    <name type="scientific">Sus scrofa</name>
    <name type="common">Pig</name>
    <dbReference type="NCBI Taxonomy" id="9823"/>
</organismHost>
<proteinExistence type="inferred from homology"/>
<name>HEMA_I72A4</name>
<comment type="function">
    <text evidence="1">Binds to sialic acid-containing receptors on the cell surface, bringing about the attachment of the virus particle to the cell. This attachment induces virion internalization either through clathrin-dependent endocytosis or through clathrin- and caveolin-independent pathway. Plays a major role in the determination of host range restriction and virulence. Class I viral fusion protein. Responsible for penetration of the virus into the cell cytoplasm by mediating the fusion of the membrane of the endocytosed virus particle with the endosomal membrane. Low pH in endosomes induces an irreversible conformational change in HA2, releasing the fusion hydrophobic peptide. Several trimers are required to form a competent fusion pore.</text>
</comment>
<comment type="subunit">
    <text evidence="1">Homotrimer of disulfide-linked HA1-HA2.</text>
</comment>
<comment type="subcellular location">
    <subcellularLocation>
        <location evidence="1">Virion membrane</location>
        <topology evidence="1">Single-pass type I membrane protein</topology>
    </subcellularLocation>
    <subcellularLocation>
        <location evidence="1">Host apical cell membrane</location>
        <topology evidence="1">Single-pass type I membrane protein</topology>
    </subcellularLocation>
    <text evidence="1">Targeted to the apical plasma membrane in epithelial polarized cells through a signal present in the transmembrane domain. Associated with glycosphingolipid- and cholesterol-enriched detergent-resistant lipid rafts.</text>
</comment>
<comment type="PTM">
    <text evidence="1">Palmitoylated.</text>
</comment>
<comment type="PTM">
    <text evidence="1">In natural infection, inactive HA is matured into HA1 and HA2 outside the cell by one or more trypsin-like, arginine-specific endoprotease secreted by the bronchial epithelial cells. One identified protease that may be involved in this process is secreted in lungs by club cells.</text>
</comment>
<comment type="miscellaneous">
    <text>Major glycoprotein, comprises over 80% of the envelope proteins present in virus particle.</text>
</comment>
<comment type="miscellaneous">
    <text>The extent of infection into host organism is determined by HA. Influenza viruses bud from the apical surface of polarized epithelial cells (e.g. bronchial epithelial cells) into lumen of lungs and are therefore usually pneumotropic. The reason is that HA is cleaved by tryptase clara which is restricted to lungs. However, HAs of H5 and H7 pantropic avian viruses subtypes can be cleaved by furin and subtilisin-type enzymes, allowing the virus to grow in other organs than lungs.</text>
</comment>
<comment type="miscellaneous">
    <text evidence="2">The influenza A genome consist of 8 RNA segments. Genetic variation of hemagglutinin and/or neuraminidase genes results in the emergence of new influenza strains. The mechanism of variation can be the result of point mutations or the result of genetic reassortment between segments of two different strains.</text>
</comment>
<comment type="similarity">
    <text evidence="1">Belongs to the influenza viruses hemagglutinin family.</text>
</comment>
<keyword id="KW-1167">Clathrin- and caveolin-independent endocytosis of virus by host</keyword>
<keyword id="KW-1165">Clathrin-mediated endocytosis of virus by host</keyword>
<keyword id="KW-1015">Disulfide bond</keyword>
<keyword id="KW-1170">Fusion of virus membrane with host endosomal membrane</keyword>
<keyword id="KW-1168">Fusion of virus membrane with host membrane</keyword>
<keyword id="KW-0325">Glycoprotein</keyword>
<keyword id="KW-0348">Hemagglutinin</keyword>
<keyword id="KW-1032">Host cell membrane</keyword>
<keyword id="KW-1043">Host membrane</keyword>
<keyword id="KW-0945">Host-virus interaction</keyword>
<keyword id="KW-0449">Lipoprotein</keyword>
<keyword id="KW-0472">Membrane</keyword>
<keyword id="KW-0564">Palmitate</keyword>
<keyword id="KW-0732">Signal</keyword>
<keyword id="KW-0812">Transmembrane</keyword>
<keyword id="KW-1133">Transmembrane helix</keyword>
<keyword id="KW-1161">Viral attachment to host cell</keyword>
<keyword id="KW-0261">Viral envelope protein</keyword>
<keyword id="KW-1162">Viral penetration into host cytoplasm</keyword>
<keyword id="KW-0946">Virion</keyword>
<keyword id="KW-1164">Virus endocytosis by host</keyword>
<keyword id="KW-1160">Virus entry into host cell</keyword>
<gene>
    <name evidence="1" type="primary">HA</name>
</gene>
<sequence>MKTIIALSYIFCLVLGQDFPGNDNSTATLCLGHHAVPNGTLVKTITNDQIEVTNATELVQSSSTGKICNNPHRILDGIDCTLIDALLGDPHCDGFQNETWDLFVERSKAFSNCYPYDVPDYASLRSLVASSGTLEFINEGFTWTGVTQNGGSNACKRGPDSGFFSRLNWLYKSGSTYPVLNVTMPNNDNFDKLYIWGVHHPSTDQEQTSLYVQASGRVTVSTKRSQQTIIPNIGSRPWVRGLSSRISIYWTIVKPGDILVINSNGNLIAPRGYFKMRTGKSSIMRSDAPIGTCISECITPNGSIPNDKPFQNVNKITYGACPKYVKQNTLKLATGMRNVPEKQTRGLFGAIAGFIENGWEGMIDGWYGFRHQNSEGTGQAADLKSTQAAIDQINGKLNRVIEKTNEKFHQIEKEFSEVEGRIQDLEKYVEDTKIDLWSYNAELLVALENQHTIDLTDSEMNKLFEKTRRQLRENAEDMGNGCFKIYHKCDNACIGSIRNGTYDHDVYRDEALNNRFQIKGVELKSGYKDWILWISFAISCFLLCVVLLGFIMWACQKGNIRCNICI</sequence>